<name>SYR_METC4</name>
<gene>
    <name evidence="1" type="primary">argS</name>
    <name type="ordered locus">Mchl_3705</name>
</gene>
<feature type="chain" id="PRO_1000198919" description="Arginine--tRNA ligase">
    <location>
        <begin position="1"/>
        <end position="585"/>
    </location>
</feature>
<feature type="short sequence motif" description="'HIGH' region">
    <location>
        <begin position="130"/>
        <end position="140"/>
    </location>
</feature>
<organism>
    <name type="scientific">Methylorubrum extorquens (strain CM4 / NCIMB 13688)</name>
    <name type="common">Methylobacterium extorquens</name>
    <dbReference type="NCBI Taxonomy" id="440085"/>
    <lineage>
        <taxon>Bacteria</taxon>
        <taxon>Pseudomonadati</taxon>
        <taxon>Pseudomonadota</taxon>
        <taxon>Alphaproteobacteria</taxon>
        <taxon>Hyphomicrobiales</taxon>
        <taxon>Methylobacteriaceae</taxon>
        <taxon>Methylorubrum</taxon>
    </lineage>
</organism>
<dbReference type="EC" id="6.1.1.19" evidence="1"/>
<dbReference type="EMBL" id="CP001298">
    <property type="protein sequence ID" value="ACK84524.1"/>
    <property type="molecule type" value="Genomic_DNA"/>
</dbReference>
<dbReference type="RefSeq" id="WP_015951749.1">
    <property type="nucleotide sequence ID" value="NC_011757.1"/>
</dbReference>
<dbReference type="SMR" id="B7KWG7"/>
<dbReference type="KEGG" id="mch:Mchl_3705"/>
<dbReference type="HOGENOM" id="CLU_006406_0_1_5"/>
<dbReference type="Proteomes" id="UP000002385">
    <property type="component" value="Chromosome"/>
</dbReference>
<dbReference type="GO" id="GO:0005737">
    <property type="term" value="C:cytoplasm"/>
    <property type="evidence" value="ECO:0007669"/>
    <property type="project" value="UniProtKB-SubCell"/>
</dbReference>
<dbReference type="GO" id="GO:0004814">
    <property type="term" value="F:arginine-tRNA ligase activity"/>
    <property type="evidence" value="ECO:0007669"/>
    <property type="project" value="UniProtKB-UniRule"/>
</dbReference>
<dbReference type="GO" id="GO:0005524">
    <property type="term" value="F:ATP binding"/>
    <property type="evidence" value="ECO:0007669"/>
    <property type="project" value="UniProtKB-UniRule"/>
</dbReference>
<dbReference type="GO" id="GO:0006420">
    <property type="term" value="P:arginyl-tRNA aminoacylation"/>
    <property type="evidence" value="ECO:0007669"/>
    <property type="project" value="UniProtKB-UniRule"/>
</dbReference>
<dbReference type="CDD" id="cd00671">
    <property type="entry name" value="ArgRS_core"/>
    <property type="match status" value="1"/>
</dbReference>
<dbReference type="FunFam" id="1.10.730.10:FF:000008">
    <property type="entry name" value="Arginine--tRNA ligase"/>
    <property type="match status" value="1"/>
</dbReference>
<dbReference type="FunFam" id="3.40.50.620:FF:000062">
    <property type="entry name" value="Arginine--tRNA ligase"/>
    <property type="match status" value="1"/>
</dbReference>
<dbReference type="Gene3D" id="3.30.1360.70">
    <property type="entry name" value="Arginyl tRNA synthetase N-terminal domain"/>
    <property type="match status" value="1"/>
</dbReference>
<dbReference type="Gene3D" id="3.40.50.620">
    <property type="entry name" value="HUPs"/>
    <property type="match status" value="1"/>
</dbReference>
<dbReference type="Gene3D" id="1.10.730.10">
    <property type="entry name" value="Isoleucyl-tRNA Synthetase, Domain 1"/>
    <property type="match status" value="1"/>
</dbReference>
<dbReference type="HAMAP" id="MF_00123">
    <property type="entry name" value="Arg_tRNA_synth"/>
    <property type="match status" value="1"/>
</dbReference>
<dbReference type="InterPro" id="IPR001412">
    <property type="entry name" value="aa-tRNA-synth_I_CS"/>
</dbReference>
<dbReference type="InterPro" id="IPR001278">
    <property type="entry name" value="Arg-tRNA-ligase"/>
</dbReference>
<dbReference type="InterPro" id="IPR005148">
    <property type="entry name" value="Arg-tRNA-synth_N"/>
</dbReference>
<dbReference type="InterPro" id="IPR036695">
    <property type="entry name" value="Arg-tRNA-synth_N_sf"/>
</dbReference>
<dbReference type="InterPro" id="IPR035684">
    <property type="entry name" value="ArgRS_core"/>
</dbReference>
<dbReference type="InterPro" id="IPR008909">
    <property type="entry name" value="DALR_anticod-bd"/>
</dbReference>
<dbReference type="InterPro" id="IPR014729">
    <property type="entry name" value="Rossmann-like_a/b/a_fold"/>
</dbReference>
<dbReference type="InterPro" id="IPR009080">
    <property type="entry name" value="tRNAsynth_Ia_anticodon-bd"/>
</dbReference>
<dbReference type="NCBIfam" id="TIGR00456">
    <property type="entry name" value="argS"/>
    <property type="match status" value="1"/>
</dbReference>
<dbReference type="PANTHER" id="PTHR11956:SF5">
    <property type="entry name" value="ARGININE--TRNA LIGASE, CYTOPLASMIC"/>
    <property type="match status" value="1"/>
</dbReference>
<dbReference type="PANTHER" id="PTHR11956">
    <property type="entry name" value="ARGINYL-TRNA SYNTHETASE"/>
    <property type="match status" value="1"/>
</dbReference>
<dbReference type="Pfam" id="PF03485">
    <property type="entry name" value="Arg_tRNA_synt_N"/>
    <property type="match status" value="1"/>
</dbReference>
<dbReference type="Pfam" id="PF05746">
    <property type="entry name" value="DALR_1"/>
    <property type="match status" value="1"/>
</dbReference>
<dbReference type="Pfam" id="PF00750">
    <property type="entry name" value="tRNA-synt_1d"/>
    <property type="match status" value="2"/>
</dbReference>
<dbReference type="PRINTS" id="PR01038">
    <property type="entry name" value="TRNASYNTHARG"/>
</dbReference>
<dbReference type="SMART" id="SM01016">
    <property type="entry name" value="Arg_tRNA_synt_N"/>
    <property type="match status" value="1"/>
</dbReference>
<dbReference type="SMART" id="SM00836">
    <property type="entry name" value="DALR_1"/>
    <property type="match status" value="1"/>
</dbReference>
<dbReference type="SUPFAM" id="SSF47323">
    <property type="entry name" value="Anticodon-binding domain of a subclass of class I aminoacyl-tRNA synthetases"/>
    <property type="match status" value="1"/>
</dbReference>
<dbReference type="SUPFAM" id="SSF55190">
    <property type="entry name" value="Arginyl-tRNA synthetase (ArgRS), N-terminal 'additional' domain"/>
    <property type="match status" value="1"/>
</dbReference>
<dbReference type="SUPFAM" id="SSF52374">
    <property type="entry name" value="Nucleotidylyl transferase"/>
    <property type="match status" value="1"/>
</dbReference>
<dbReference type="PROSITE" id="PS00178">
    <property type="entry name" value="AA_TRNA_LIGASE_I"/>
    <property type="match status" value="1"/>
</dbReference>
<comment type="catalytic activity">
    <reaction evidence="1">
        <text>tRNA(Arg) + L-arginine + ATP = L-arginyl-tRNA(Arg) + AMP + diphosphate</text>
        <dbReference type="Rhea" id="RHEA:20301"/>
        <dbReference type="Rhea" id="RHEA-COMP:9658"/>
        <dbReference type="Rhea" id="RHEA-COMP:9673"/>
        <dbReference type="ChEBI" id="CHEBI:30616"/>
        <dbReference type="ChEBI" id="CHEBI:32682"/>
        <dbReference type="ChEBI" id="CHEBI:33019"/>
        <dbReference type="ChEBI" id="CHEBI:78442"/>
        <dbReference type="ChEBI" id="CHEBI:78513"/>
        <dbReference type="ChEBI" id="CHEBI:456215"/>
        <dbReference type="EC" id="6.1.1.19"/>
    </reaction>
</comment>
<comment type="subunit">
    <text evidence="1">Monomer.</text>
</comment>
<comment type="subcellular location">
    <subcellularLocation>
        <location evidence="1">Cytoplasm</location>
    </subcellularLocation>
</comment>
<comment type="similarity">
    <text evidence="1">Belongs to the class-I aminoacyl-tRNA synthetase family.</text>
</comment>
<accession>B7KWG7</accession>
<keyword id="KW-0030">Aminoacyl-tRNA synthetase</keyword>
<keyword id="KW-0067">ATP-binding</keyword>
<keyword id="KW-0963">Cytoplasm</keyword>
<keyword id="KW-0436">Ligase</keyword>
<keyword id="KW-0547">Nucleotide-binding</keyword>
<keyword id="KW-0648">Protein biosynthesis</keyword>
<reference key="1">
    <citation type="submission" date="2008-12" db="EMBL/GenBank/DDBJ databases">
        <title>Complete sequence of chromosome of Methylobacterium chloromethanicum CM4.</title>
        <authorList>
            <consortium name="US DOE Joint Genome Institute"/>
            <person name="Lucas S."/>
            <person name="Copeland A."/>
            <person name="Lapidus A."/>
            <person name="Glavina del Rio T."/>
            <person name="Dalin E."/>
            <person name="Tice H."/>
            <person name="Bruce D."/>
            <person name="Goodwin L."/>
            <person name="Pitluck S."/>
            <person name="Chertkov O."/>
            <person name="Brettin T."/>
            <person name="Detter J.C."/>
            <person name="Han C."/>
            <person name="Larimer F."/>
            <person name="Land M."/>
            <person name="Hauser L."/>
            <person name="Kyrpides N."/>
            <person name="Mikhailova N."/>
            <person name="Marx C."/>
            <person name="Richardson P."/>
        </authorList>
    </citation>
    <scope>NUCLEOTIDE SEQUENCE [LARGE SCALE GENOMIC DNA]</scope>
    <source>
        <strain>CM4 / NCIMB 13688</strain>
    </source>
</reference>
<protein>
    <recommendedName>
        <fullName evidence="1">Arginine--tRNA ligase</fullName>
        <ecNumber evidence="1">6.1.1.19</ecNumber>
    </recommendedName>
    <alternativeName>
        <fullName evidence="1">Arginyl-tRNA synthetase</fullName>
        <shortName evidence="1">ArgRS</shortName>
    </alternativeName>
</protein>
<proteinExistence type="inferred from homology"/>
<evidence type="ECO:0000255" key="1">
    <source>
        <dbReference type="HAMAP-Rule" id="MF_00123"/>
    </source>
</evidence>
<sequence>MNIFALFETRVREALESLTRSGRLPEGLDLSRVVVEPPRDASHGDLATNAALVLAKEAKQNPKALGEALAEELRTDPRIVEASVAGPGFINLRLAPEVFQDVIRAALSEGENFGRGQMPGGPVNIEYVSANPTGPMHVGHGRGAVFGDALANLLAAAGRPVTREYYINDAGAQVDVLARSAYLRYREALGETITIPEGLYPGDYLKPVGMRLAETHGRALLDQPEHEWLPQVRRFAIDAMMAMIREDLAAIGIRHDVFFSEATLQGENGGKVAELLDALRQKGLVYEGRLPPPKGQLPDDWEDREQTLFRSSQFGDDVDRALLKSDGSFTYFASDIAYHRDKWLRGANELIDVLGADHGGYVKRMQAAVKAVSDGQARLDVKLCQLVRLLRAGEPVKMSKRAGEFVTLRDVIDEVGRDAIRFMMLYRKNDATLDFDLAKVVEQSKDNPVFYVQYGHARRFSVLRQAREALPGEDFSPAALLADADLSVLTDPGEIEMMRLIAQYPRVLESAAAAHEPHRIAFYLYETASSLHSFWNKGKDLPQLRIVNPTDRNSTRARLALVEALGGVLASGLAVLGVSAPNEMR</sequence>